<reference key="1">
    <citation type="journal article" date="2012" name="MBio">
        <title>Comparative genome analysis of Trichophyton rubrum and related dermatophytes reveals candidate genes involved in infection.</title>
        <authorList>
            <person name="Martinez D.A."/>
            <person name="Oliver B.G."/>
            <person name="Graeser Y."/>
            <person name="Goldberg J.M."/>
            <person name="Li W."/>
            <person name="Martinez-Rossi N.M."/>
            <person name="Monod M."/>
            <person name="Shelest E."/>
            <person name="Barton R.C."/>
            <person name="Birch E."/>
            <person name="Brakhage A.A."/>
            <person name="Chen Z."/>
            <person name="Gurr S.J."/>
            <person name="Heiman D."/>
            <person name="Heitman J."/>
            <person name="Kosti I."/>
            <person name="Rossi A."/>
            <person name="Saif S."/>
            <person name="Samalova M."/>
            <person name="Saunders C.W."/>
            <person name="Shea T."/>
            <person name="Summerbell R.C."/>
            <person name="Xu J."/>
            <person name="Young S."/>
            <person name="Zeng Q."/>
            <person name="Birren B.W."/>
            <person name="Cuomo C.A."/>
            <person name="White T.C."/>
        </authorList>
    </citation>
    <scope>NUCLEOTIDE SEQUENCE [LARGE SCALE GENOMIC DNA]</scope>
    <source>
        <strain>ATCC MYA-4604 / CBS 118893</strain>
    </source>
</reference>
<accession>E4URG0</accession>
<feature type="signal peptide" evidence="2">
    <location>
        <begin position="1"/>
        <end position="24"/>
    </location>
</feature>
<feature type="chain" id="PRO_0000411757" description="Probable zinc metalloprotease MGYG_02393">
    <location>
        <begin position="25"/>
        <end position="500"/>
    </location>
</feature>
<feature type="domain" description="Fibronectin type-III" evidence="3">
    <location>
        <begin position="414"/>
        <end position="500"/>
    </location>
</feature>
<feature type="binding site" evidence="1">
    <location>
        <position position="174"/>
    </location>
    <ligand>
        <name>Zn(2+)</name>
        <dbReference type="ChEBI" id="CHEBI:29105"/>
        <label>1</label>
    </ligand>
</feature>
<feature type="binding site" evidence="1">
    <location>
        <position position="194"/>
    </location>
    <ligand>
        <name>Zn(2+)</name>
        <dbReference type="ChEBI" id="CHEBI:29105"/>
        <label>1</label>
    </ligand>
</feature>
<feature type="binding site" evidence="1">
    <location>
        <position position="194"/>
    </location>
    <ligand>
        <name>Zn(2+)</name>
        <dbReference type="ChEBI" id="CHEBI:29105"/>
        <label>2</label>
        <note>catalytic</note>
    </ligand>
</feature>
<feature type="binding site" evidence="1">
    <location>
        <position position="230"/>
    </location>
    <ligand>
        <name>Zn(2+)</name>
        <dbReference type="ChEBI" id="CHEBI:29105"/>
        <label>2</label>
        <note>catalytic</note>
    </ligand>
</feature>
<feature type="binding site" evidence="1">
    <location>
        <position position="257"/>
    </location>
    <ligand>
        <name>Zn(2+)</name>
        <dbReference type="ChEBI" id="CHEBI:29105"/>
        <label>1</label>
    </ligand>
</feature>
<feature type="glycosylation site" description="N-linked (GlcNAc...) asparagine" evidence="2">
    <location>
        <position position="61"/>
    </location>
</feature>
<feature type="glycosylation site" description="N-linked (GlcNAc...) asparagine" evidence="2">
    <location>
        <position position="103"/>
    </location>
</feature>
<feature type="glycosylation site" description="N-linked (GlcNAc...) asparagine" evidence="2">
    <location>
        <position position="124"/>
    </location>
</feature>
<feature type="glycosylation site" description="N-linked (GlcNAc...) asparagine" evidence="2">
    <location>
        <position position="245"/>
    </location>
</feature>
<feature type="glycosylation site" description="N-linked (GlcNAc...) asparagine" evidence="2">
    <location>
        <position position="421"/>
    </location>
</feature>
<feature type="glycosylation site" description="N-linked (GlcNAc...) asparagine" evidence="2">
    <location>
        <position position="427"/>
    </location>
</feature>
<proteinExistence type="inferred from homology"/>
<comment type="cofactor">
    <cofactor evidence="1">
        <name>Zn(2+)</name>
        <dbReference type="ChEBI" id="CHEBI:29105"/>
    </cofactor>
    <text evidence="1">Binds 2 Zn(2+) ions per subunit.</text>
</comment>
<comment type="subcellular location">
    <subcellularLocation>
        <location evidence="4">Secreted</location>
    </subcellularLocation>
</comment>
<comment type="similarity">
    <text evidence="4">Belongs to the peptidase M28 family. M28B subfamily.</text>
</comment>
<dbReference type="EC" id="3.4.-.-"/>
<dbReference type="EMBL" id="DS989823">
    <property type="protein sequence ID" value="EFQ99382.1"/>
    <property type="molecule type" value="Genomic_DNA"/>
</dbReference>
<dbReference type="RefSeq" id="XP_003174865.1">
    <property type="nucleotide sequence ID" value="XM_003174817.1"/>
</dbReference>
<dbReference type="SMR" id="E4URG0"/>
<dbReference type="STRING" id="535722.E4URG0"/>
<dbReference type="GeneID" id="10030166"/>
<dbReference type="VEuPathDB" id="FungiDB:MGYG_02393"/>
<dbReference type="eggNOG" id="ENOG502R701">
    <property type="taxonomic scope" value="Eukaryota"/>
</dbReference>
<dbReference type="HOGENOM" id="CLU_047420_0_0_1"/>
<dbReference type="InParanoid" id="E4URG0"/>
<dbReference type="OMA" id="NNDMIGN"/>
<dbReference type="OrthoDB" id="10013407at2759"/>
<dbReference type="Proteomes" id="UP000002669">
    <property type="component" value="Unassembled WGS sequence"/>
</dbReference>
<dbReference type="GO" id="GO:0005576">
    <property type="term" value="C:extracellular region"/>
    <property type="evidence" value="ECO:0007669"/>
    <property type="project" value="UniProtKB-SubCell"/>
</dbReference>
<dbReference type="GO" id="GO:0046872">
    <property type="term" value="F:metal ion binding"/>
    <property type="evidence" value="ECO:0007669"/>
    <property type="project" value="UniProtKB-KW"/>
</dbReference>
<dbReference type="GO" id="GO:0008235">
    <property type="term" value="F:metalloexopeptidase activity"/>
    <property type="evidence" value="ECO:0007669"/>
    <property type="project" value="InterPro"/>
</dbReference>
<dbReference type="GO" id="GO:0006508">
    <property type="term" value="P:proteolysis"/>
    <property type="evidence" value="ECO:0007669"/>
    <property type="project" value="UniProtKB-KW"/>
</dbReference>
<dbReference type="CDD" id="cd00063">
    <property type="entry name" value="FN3"/>
    <property type="match status" value="1"/>
</dbReference>
<dbReference type="CDD" id="cd05642">
    <property type="entry name" value="M28_like"/>
    <property type="match status" value="1"/>
</dbReference>
<dbReference type="Gene3D" id="3.40.630.10">
    <property type="entry name" value="Zn peptidases"/>
    <property type="match status" value="1"/>
</dbReference>
<dbReference type="InterPro" id="IPR003961">
    <property type="entry name" value="FN3_dom"/>
</dbReference>
<dbReference type="InterPro" id="IPR036116">
    <property type="entry name" value="FN3_sf"/>
</dbReference>
<dbReference type="InterPro" id="IPR045175">
    <property type="entry name" value="M28_fam"/>
</dbReference>
<dbReference type="InterPro" id="IPR007484">
    <property type="entry name" value="Peptidase_M28"/>
</dbReference>
<dbReference type="PANTHER" id="PTHR12147">
    <property type="entry name" value="METALLOPEPTIDASE M28 FAMILY MEMBER"/>
    <property type="match status" value="1"/>
</dbReference>
<dbReference type="PANTHER" id="PTHR12147:SF26">
    <property type="entry name" value="PEPTIDASE M28 DOMAIN-CONTAINING PROTEIN"/>
    <property type="match status" value="1"/>
</dbReference>
<dbReference type="Pfam" id="PF04389">
    <property type="entry name" value="Peptidase_M28"/>
    <property type="match status" value="1"/>
</dbReference>
<dbReference type="SUPFAM" id="SSF49265">
    <property type="entry name" value="Fibronectin type III"/>
    <property type="match status" value="1"/>
</dbReference>
<dbReference type="SUPFAM" id="SSF53187">
    <property type="entry name" value="Zn-dependent exopeptidases"/>
    <property type="match status" value="1"/>
</dbReference>
<dbReference type="PROSITE" id="PS50853">
    <property type="entry name" value="FN3"/>
    <property type="match status" value="1"/>
</dbReference>
<sequence length="500" mass="54844">MHLSMGGLLPGLALLASANALALALPLESSVYTVQVTNPFHESLFSCPAASWPKVKLGSENRSQEPSKDLKKILSQISPKRIEATIRKLVSFGTRHTLSTQTNATYGIGAARDWIESEFQRYANASDGRLTVAVVGYDQQPDGRRIPFPVRISDVVATLKGEGDPERVYLVSGHYDSRNSDALDYKGIAPGANDDASGVAVSLELARVMSQRGLPRPKATIVFAAVAGEEQGLYGATFLAQSYRNSSANIEGMFTNDIIGSSTADDGTREPHVVRLFAQGIPPLNVEDQAMRERRIMIGGDNDTPARQLARFVKETAENKHTDMEVSVIYRLDRYLRGGDHRPFLEAGYPAARFTEPNENFAHQHQDIRIDKDPKTGMDIQYGDLPEFCDFDYISRVGKVNAAALWNLAMSPGMPRNVRVNTSDLTNDSKFTWDPPAGGNALVGGYEIVWRSTNAPFWTHKMDVGMVQEATIDLSKDNVIFGIRARGKNGERGVAVLPFP</sequence>
<gene>
    <name type="ORF">MGYG_02393</name>
</gene>
<name>M28P2_ARTGP</name>
<protein>
    <recommendedName>
        <fullName>Probable zinc metalloprotease MGYG_02393</fullName>
        <ecNumber>3.4.-.-</ecNumber>
    </recommendedName>
</protein>
<evidence type="ECO:0000250" key="1"/>
<evidence type="ECO:0000255" key="2"/>
<evidence type="ECO:0000255" key="3">
    <source>
        <dbReference type="PROSITE-ProRule" id="PRU00316"/>
    </source>
</evidence>
<evidence type="ECO:0000305" key="4"/>
<organism>
    <name type="scientific">Arthroderma gypseum (strain ATCC MYA-4604 / CBS 118893)</name>
    <name type="common">Microsporum gypseum</name>
    <dbReference type="NCBI Taxonomy" id="535722"/>
    <lineage>
        <taxon>Eukaryota</taxon>
        <taxon>Fungi</taxon>
        <taxon>Dikarya</taxon>
        <taxon>Ascomycota</taxon>
        <taxon>Pezizomycotina</taxon>
        <taxon>Eurotiomycetes</taxon>
        <taxon>Eurotiomycetidae</taxon>
        <taxon>Onygenales</taxon>
        <taxon>Arthrodermataceae</taxon>
        <taxon>Nannizzia</taxon>
    </lineage>
</organism>
<keyword id="KW-0325">Glycoprotein</keyword>
<keyword id="KW-0378">Hydrolase</keyword>
<keyword id="KW-0479">Metal-binding</keyword>
<keyword id="KW-0482">Metalloprotease</keyword>
<keyword id="KW-0645">Protease</keyword>
<keyword id="KW-1185">Reference proteome</keyword>
<keyword id="KW-0964">Secreted</keyword>
<keyword id="KW-0732">Signal</keyword>
<keyword id="KW-0862">Zinc</keyword>